<organism>
    <name type="scientific">Shigella flexneri</name>
    <dbReference type="NCBI Taxonomy" id="623"/>
    <lineage>
        <taxon>Bacteria</taxon>
        <taxon>Pseudomonadati</taxon>
        <taxon>Pseudomonadota</taxon>
        <taxon>Gammaproteobacteria</taxon>
        <taxon>Enterobacterales</taxon>
        <taxon>Enterobacteriaceae</taxon>
        <taxon>Shigella</taxon>
    </lineage>
</organism>
<sequence length="517" mass="58661">MDIIGGQHLRQMWDDLADVYGHKTALICESSGGVVNRYSYLELNQEINRTANLFYTLGIRKGNKVALHLDNCPEFIFCWFGLAKIGAIMVPINARLLREESEWILQNSQACLLVTSAQFYPMYQQIQQEDATQLRHICLTDVALPADDGVSSFTQLKNQQPATLCYAPPLSTDDTAEILFTSGTTSRPKGVVITHYNLRFAGYYSAWQCALRDDDVYMTVMPAFHIDCQCTAAMAAFSAGATFVLVEKYSARAFWGQAQKYRATITECIPMMIRTLMVQPPSANDRQHRLREVMFYLNLSEQEKDAFCERFGVRLLTSYGMTETIVGIIGDRPSDKRRWPSIGRAGFCYEAEIRDDHNRPLPAGEIGEICIKGVPGKTIFKEYFLNPKATAKVLEADGWLHTGDTGYRDEEGFFYFVDRRCNMIKRGGENVSCVELENIIATHPKIQDIVVVGIKDSIRDEAIKAFVVLNEGETLSEEEFFRFCEQNMAKFKVPSYLEIRKDLPRNCSGKIIRKNLK</sequence>
<name>CAIC_SHIFL</name>
<feature type="chain" id="PRO_0000193073" description="Crotonobetaine/carnitine--CoA ligase">
    <location>
        <begin position="1"/>
        <end position="517"/>
    </location>
</feature>
<comment type="function">
    <text evidence="1">Catalyzes the transfer of CoA to carnitine, generating the initial carnitinyl-CoA needed for the CaiB reaction cycle. Also has activity toward crotonobetaine and gamma-butyrobetaine.</text>
</comment>
<comment type="catalytic activity">
    <reaction evidence="1">
        <text>4-(trimethylamino)butanoate + ATP + CoA = 4-(trimethylamino)butanoyl-CoA + AMP + diphosphate</text>
        <dbReference type="Rhea" id="RHEA:55960"/>
        <dbReference type="ChEBI" id="CHEBI:16244"/>
        <dbReference type="ChEBI" id="CHEBI:30616"/>
        <dbReference type="ChEBI" id="CHEBI:33019"/>
        <dbReference type="ChEBI" id="CHEBI:57287"/>
        <dbReference type="ChEBI" id="CHEBI:61513"/>
        <dbReference type="ChEBI" id="CHEBI:456215"/>
        <dbReference type="EC" id="6.2.1.48"/>
    </reaction>
</comment>
<comment type="catalytic activity">
    <reaction evidence="1">
        <text>crotonobetaine + ATP + CoA = crotonobetainyl-CoA + AMP + diphosphate</text>
        <dbReference type="Rhea" id="RHEA:30079"/>
        <dbReference type="ChEBI" id="CHEBI:17237"/>
        <dbReference type="ChEBI" id="CHEBI:30616"/>
        <dbReference type="ChEBI" id="CHEBI:33019"/>
        <dbReference type="ChEBI" id="CHEBI:57287"/>
        <dbReference type="ChEBI" id="CHEBI:60933"/>
        <dbReference type="ChEBI" id="CHEBI:456215"/>
        <dbReference type="EC" id="6.2.1.48"/>
    </reaction>
</comment>
<comment type="catalytic activity">
    <reaction evidence="1">
        <text>(R)-carnitine + ATP + CoA = (R)-carnitinyl-CoA + AMP + diphosphate</text>
        <dbReference type="Rhea" id="RHEA:28514"/>
        <dbReference type="ChEBI" id="CHEBI:16347"/>
        <dbReference type="ChEBI" id="CHEBI:30616"/>
        <dbReference type="ChEBI" id="CHEBI:33019"/>
        <dbReference type="ChEBI" id="CHEBI:57287"/>
        <dbReference type="ChEBI" id="CHEBI:60932"/>
        <dbReference type="ChEBI" id="CHEBI:456215"/>
        <dbReference type="EC" id="6.2.1.48"/>
    </reaction>
</comment>
<comment type="pathway">
    <text evidence="1">Amine and polyamine metabolism; carnitine metabolism.</text>
</comment>
<comment type="similarity">
    <text evidence="1">Belongs to the ATP-dependent AMP-binding enzyme family.</text>
</comment>
<comment type="sequence caution" evidence="2">
    <conflict type="erroneous initiation">
        <sequence resource="EMBL-CDS" id="AAN41700"/>
    </conflict>
</comment>
<comment type="sequence caution" evidence="2">
    <conflict type="erroneous initiation">
        <sequence resource="EMBL-CDS" id="AAP15581"/>
    </conflict>
</comment>
<proteinExistence type="inferred from homology"/>
<gene>
    <name evidence="1" type="primary">caiC</name>
    <name type="ordered locus">SF0034</name>
    <name type="ordered locus">S0036</name>
</gene>
<protein>
    <recommendedName>
        <fullName evidence="1">Crotonobetaine/carnitine--CoA ligase</fullName>
        <ecNumber evidence="1">6.2.1.48</ecNumber>
    </recommendedName>
</protein>
<accession>Q83MG9</accession>
<accession>Q7C3C0</accession>
<dbReference type="EC" id="6.2.1.48" evidence="1"/>
<dbReference type="EMBL" id="AE005674">
    <property type="protein sequence ID" value="AAN41700.1"/>
    <property type="status" value="ALT_INIT"/>
    <property type="molecule type" value="Genomic_DNA"/>
</dbReference>
<dbReference type="EMBL" id="AE014073">
    <property type="protein sequence ID" value="AAP15581.1"/>
    <property type="status" value="ALT_INIT"/>
    <property type="molecule type" value="Genomic_DNA"/>
</dbReference>
<dbReference type="RefSeq" id="NP_705993.1">
    <property type="nucleotide sequence ID" value="NC_004337.2"/>
</dbReference>
<dbReference type="RefSeq" id="WP_005053636.1">
    <property type="nucleotide sequence ID" value="NZ_WPGW01000005.1"/>
</dbReference>
<dbReference type="SMR" id="Q83MG9"/>
<dbReference type="STRING" id="198214.SF0034"/>
<dbReference type="PaxDb" id="198214-SF0034"/>
<dbReference type="GeneID" id="1024583"/>
<dbReference type="KEGG" id="sfl:SF0034"/>
<dbReference type="KEGG" id="sfx:S0036"/>
<dbReference type="PATRIC" id="fig|198214.7.peg.40"/>
<dbReference type="HOGENOM" id="CLU_000022_59_0_6"/>
<dbReference type="UniPathway" id="UPA00117"/>
<dbReference type="Proteomes" id="UP000001006">
    <property type="component" value="Chromosome"/>
</dbReference>
<dbReference type="Proteomes" id="UP000002673">
    <property type="component" value="Chromosome"/>
</dbReference>
<dbReference type="GO" id="GO:0051108">
    <property type="term" value="F:carnitine-CoA ligase activity"/>
    <property type="evidence" value="ECO:0007669"/>
    <property type="project" value="InterPro"/>
</dbReference>
<dbReference type="GO" id="GO:0051109">
    <property type="term" value="F:crotonobetaine-CoA ligase activity"/>
    <property type="evidence" value="ECO:0007669"/>
    <property type="project" value="InterPro"/>
</dbReference>
<dbReference type="GO" id="GO:0031956">
    <property type="term" value="F:medium-chain fatty acid-CoA ligase activity"/>
    <property type="evidence" value="ECO:0007669"/>
    <property type="project" value="TreeGrafter"/>
</dbReference>
<dbReference type="GO" id="GO:0009437">
    <property type="term" value="P:carnitine metabolic process"/>
    <property type="evidence" value="ECO:0007669"/>
    <property type="project" value="UniProtKB-UniRule"/>
</dbReference>
<dbReference type="GO" id="GO:0006631">
    <property type="term" value="P:fatty acid metabolic process"/>
    <property type="evidence" value="ECO:0007669"/>
    <property type="project" value="TreeGrafter"/>
</dbReference>
<dbReference type="CDD" id="cd05934">
    <property type="entry name" value="FACL_DitJ_like"/>
    <property type="match status" value="1"/>
</dbReference>
<dbReference type="FunFam" id="3.30.300.30:FF:000011">
    <property type="entry name" value="Crotonobetaine/carnitine--CoA ligase"/>
    <property type="match status" value="1"/>
</dbReference>
<dbReference type="FunFam" id="3.40.50.12780:FF:000017">
    <property type="entry name" value="Crotonobetaine/carnitine--CoA ligase"/>
    <property type="match status" value="1"/>
</dbReference>
<dbReference type="Gene3D" id="3.30.300.30">
    <property type="match status" value="1"/>
</dbReference>
<dbReference type="Gene3D" id="3.40.50.12780">
    <property type="entry name" value="N-terminal domain of ligase-like"/>
    <property type="match status" value="1"/>
</dbReference>
<dbReference type="HAMAP" id="MF_01524">
    <property type="entry name" value="CaiC"/>
    <property type="match status" value="1"/>
</dbReference>
<dbReference type="InterPro" id="IPR025110">
    <property type="entry name" value="AMP-bd_C"/>
</dbReference>
<dbReference type="InterPro" id="IPR045851">
    <property type="entry name" value="AMP-bd_C_sf"/>
</dbReference>
<dbReference type="InterPro" id="IPR020845">
    <property type="entry name" value="AMP-binding_CS"/>
</dbReference>
<dbReference type="InterPro" id="IPR000873">
    <property type="entry name" value="AMP-dep_synth/lig_dom"/>
</dbReference>
<dbReference type="InterPro" id="IPR042099">
    <property type="entry name" value="ANL_N_sf"/>
</dbReference>
<dbReference type="InterPro" id="IPR023456">
    <property type="entry name" value="CaiC"/>
</dbReference>
<dbReference type="NCBIfam" id="NF005947">
    <property type="entry name" value="PRK08008.1"/>
    <property type="match status" value="1"/>
</dbReference>
<dbReference type="PANTHER" id="PTHR43201">
    <property type="entry name" value="ACYL-COA SYNTHETASE"/>
    <property type="match status" value="1"/>
</dbReference>
<dbReference type="PANTHER" id="PTHR43201:SF5">
    <property type="entry name" value="MEDIUM-CHAIN ACYL-COA LIGASE ACSF2, MITOCHONDRIAL"/>
    <property type="match status" value="1"/>
</dbReference>
<dbReference type="Pfam" id="PF00501">
    <property type="entry name" value="AMP-binding"/>
    <property type="match status" value="1"/>
</dbReference>
<dbReference type="Pfam" id="PF13193">
    <property type="entry name" value="AMP-binding_C"/>
    <property type="match status" value="1"/>
</dbReference>
<dbReference type="SUPFAM" id="SSF56801">
    <property type="entry name" value="Acetyl-CoA synthetase-like"/>
    <property type="match status" value="1"/>
</dbReference>
<dbReference type="PROSITE" id="PS00455">
    <property type="entry name" value="AMP_BINDING"/>
    <property type="match status" value="1"/>
</dbReference>
<reference key="1">
    <citation type="journal article" date="2002" name="Nucleic Acids Res.">
        <title>Genome sequence of Shigella flexneri 2a: insights into pathogenicity through comparison with genomes of Escherichia coli K12 and O157.</title>
        <authorList>
            <person name="Jin Q."/>
            <person name="Yuan Z."/>
            <person name="Xu J."/>
            <person name="Wang Y."/>
            <person name="Shen Y."/>
            <person name="Lu W."/>
            <person name="Wang J."/>
            <person name="Liu H."/>
            <person name="Yang J."/>
            <person name="Yang F."/>
            <person name="Zhang X."/>
            <person name="Zhang J."/>
            <person name="Yang G."/>
            <person name="Wu H."/>
            <person name="Qu D."/>
            <person name="Dong J."/>
            <person name="Sun L."/>
            <person name="Xue Y."/>
            <person name="Zhao A."/>
            <person name="Gao Y."/>
            <person name="Zhu J."/>
            <person name="Kan B."/>
            <person name="Ding K."/>
            <person name="Chen S."/>
            <person name="Cheng H."/>
            <person name="Yao Z."/>
            <person name="He B."/>
            <person name="Chen R."/>
            <person name="Ma D."/>
            <person name="Qiang B."/>
            <person name="Wen Y."/>
            <person name="Hou Y."/>
            <person name="Yu J."/>
        </authorList>
    </citation>
    <scope>NUCLEOTIDE SEQUENCE [LARGE SCALE GENOMIC DNA]</scope>
    <source>
        <strain>301 / Serotype 2a</strain>
    </source>
</reference>
<reference key="2">
    <citation type="journal article" date="2003" name="Infect. Immun.">
        <title>Complete genome sequence and comparative genomics of Shigella flexneri serotype 2a strain 2457T.</title>
        <authorList>
            <person name="Wei J."/>
            <person name="Goldberg M.B."/>
            <person name="Burland V."/>
            <person name="Venkatesan M.M."/>
            <person name="Deng W."/>
            <person name="Fournier G."/>
            <person name="Mayhew G.F."/>
            <person name="Plunkett G. III"/>
            <person name="Rose D.J."/>
            <person name="Darling A."/>
            <person name="Mau B."/>
            <person name="Perna N.T."/>
            <person name="Payne S.M."/>
            <person name="Runyen-Janecky L.J."/>
            <person name="Zhou S."/>
            <person name="Schwartz D.C."/>
            <person name="Blattner F.R."/>
        </authorList>
    </citation>
    <scope>NUCLEOTIDE SEQUENCE [LARGE SCALE GENOMIC DNA]</scope>
    <source>
        <strain>ATCC 700930 / 2457T / Serotype 2a</strain>
    </source>
</reference>
<evidence type="ECO:0000255" key="1">
    <source>
        <dbReference type="HAMAP-Rule" id="MF_01524"/>
    </source>
</evidence>
<evidence type="ECO:0000305" key="2"/>
<keyword id="KW-0436">Ligase</keyword>
<keyword id="KW-1185">Reference proteome</keyword>